<dbReference type="EC" id="4.1.2.40"/>
<dbReference type="EMBL" id="AF416702">
    <property type="protein sequence ID" value="AAL60165.1"/>
    <property type="molecule type" value="Genomic_DNA"/>
</dbReference>
<dbReference type="SMR" id="Q8VS16"/>
<dbReference type="eggNOG" id="COG0191">
    <property type="taxonomic scope" value="Bacteria"/>
</dbReference>
<dbReference type="BRENDA" id="4.1.2.40">
    <property type="organism ID" value="2811"/>
</dbReference>
<dbReference type="UniPathway" id="UPA00704">
    <property type="reaction ID" value="UER00716"/>
</dbReference>
<dbReference type="GO" id="GO:0005829">
    <property type="term" value="C:cytosol"/>
    <property type="evidence" value="ECO:0007669"/>
    <property type="project" value="TreeGrafter"/>
</dbReference>
<dbReference type="GO" id="GO:0009025">
    <property type="term" value="F:tagatose-bisphosphate aldolase activity"/>
    <property type="evidence" value="ECO:0007669"/>
    <property type="project" value="UniProtKB-UniRule"/>
</dbReference>
<dbReference type="GO" id="GO:0008270">
    <property type="term" value="F:zinc ion binding"/>
    <property type="evidence" value="ECO:0007669"/>
    <property type="project" value="UniProtKB-UniRule"/>
</dbReference>
<dbReference type="GO" id="GO:2001059">
    <property type="term" value="P:D-tagatose 6-phosphate catabolic process"/>
    <property type="evidence" value="ECO:0007669"/>
    <property type="project" value="UniProtKB-UniRule"/>
</dbReference>
<dbReference type="GO" id="GO:0019404">
    <property type="term" value="P:galactitol catabolic process"/>
    <property type="evidence" value="ECO:0007669"/>
    <property type="project" value="InterPro"/>
</dbReference>
<dbReference type="CDD" id="cd00947">
    <property type="entry name" value="TBP_aldolase_IIB"/>
    <property type="match status" value="1"/>
</dbReference>
<dbReference type="FunFam" id="3.20.20.70:FF:000043">
    <property type="entry name" value="D-tagatose-1,6-bisphosphate aldolase subunit GatY"/>
    <property type="match status" value="1"/>
</dbReference>
<dbReference type="Gene3D" id="3.20.20.70">
    <property type="entry name" value="Aldolase class I"/>
    <property type="match status" value="1"/>
</dbReference>
<dbReference type="HAMAP" id="MF_01294">
    <property type="entry name" value="TagBP_aldolase_GatY"/>
    <property type="match status" value="1"/>
</dbReference>
<dbReference type="InterPro" id="IPR013785">
    <property type="entry name" value="Aldolase_TIM"/>
</dbReference>
<dbReference type="InterPro" id="IPR050246">
    <property type="entry name" value="Class_II_FBP_aldolase"/>
</dbReference>
<dbReference type="InterPro" id="IPR000771">
    <property type="entry name" value="FBA_II"/>
</dbReference>
<dbReference type="InterPro" id="IPR011288">
    <property type="entry name" value="TagBP_ald_KbaY/GatY"/>
</dbReference>
<dbReference type="InterPro" id="IPR023955">
    <property type="entry name" value="TagBP_aldolase_GatY"/>
</dbReference>
<dbReference type="NCBIfam" id="TIGR00167">
    <property type="entry name" value="cbbA"/>
    <property type="match status" value="1"/>
</dbReference>
<dbReference type="NCBIfam" id="NF006626">
    <property type="entry name" value="PRK09195.1"/>
    <property type="match status" value="1"/>
</dbReference>
<dbReference type="NCBIfam" id="NF009374">
    <property type="entry name" value="PRK12737.1"/>
    <property type="match status" value="1"/>
</dbReference>
<dbReference type="NCBIfam" id="TIGR01858">
    <property type="entry name" value="tag_bisphos_ald"/>
    <property type="match status" value="1"/>
</dbReference>
<dbReference type="PANTHER" id="PTHR30304">
    <property type="entry name" value="D-TAGATOSE-1,6-BISPHOSPHATE ALDOLASE"/>
    <property type="match status" value="1"/>
</dbReference>
<dbReference type="PANTHER" id="PTHR30304:SF0">
    <property type="entry name" value="D-TAGATOSE-1,6-BISPHOSPHATE ALDOLASE SUBUNIT GATY-RELATED"/>
    <property type="match status" value="1"/>
</dbReference>
<dbReference type="Pfam" id="PF01116">
    <property type="entry name" value="F_bP_aldolase"/>
    <property type="match status" value="1"/>
</dbReference>
<dbReference type="PIRSF" id="PIRSF001359">
    <property type="entry name" value="F_bP_aldolase_II"/>
    <property type="match status" value="1"/>
</dbReference>
<dbReference type="SUPFAM" id="SSF51569">
    <property type="entry name" value="Aldolase"/>
    <property type="match status" value="1"/>
</dbReference>
<dbReference type="PROSITE" id="PS00806">
    <property type="entry name" value="ALDOLASE_CLASS_II_2"/>
    <property type="match status" value="1"/>
</dbReference>
<name>GATY_KLEOX</name>
<organism>
    <name type="scientific">Klebsiella oxytoca</name>
    <dbReference type="NCBI Taxonomy" id="571"/>
    <lineage>
        <taxon>Bacteria</taxon>
        <taxon>Pseudomonadati</taxon>
        <taxon>Pseudomonadota</taxon>
        <taxon>Gammaproteobacteria</taxon>
        <taxon>Enterobacterales</taxon>
        <taxon>Enterobacteriaceae</taxon>
        <taxon>Klebsiella/Raoultella group</taxon>
        <taxon>Klebsiella</taxon>
    </lineage>
</organism>
<feature type="chain" id="PRO_0000355331" description="D-tagatose-1,6-bisphosphate aldolase subunit GatY">
    <location>
        <begin position="1"/>
        <end position="284"/>
    </location>
</feature>
<feature type="active site" description="Proton donor" evidence="1">
    <location>
        <position position="82"/>
    </location>
</feature>
<feature type="binding site" evidence="1">
    <location>
        <position position="83"/>
    </location>
    <ligand>
        <name>Zn(2+)</name>
        <dbReference type="ChEBI" id="CHEBI:29105"/>
        <note>catalytic</note>
    </ligand>
</feature>
<feature type="binding site" evidence="1">
    <location>
        <position position="180"/>
    </location>
    <ligand>
        <name>Zn(2+)</name>
        <dbReference type="ChEBI" id="CHEBI:29105"/>
        <note>catalytic</note>
    </ligand>
</feature>
<feature type="binding site" evidence="1">
    <location>
        <position position="181"/>
    </location>
    <ligand>
        <name>dihydroxyacetone phosphate</name>
        <dbReference type="ChEBI" id="CHEBI:57642"/>
    </ligand>
</feature>
<feature type="binding site" evidence="1">
    <location>
        <position position="208"/>
    </location>
    <ligand>
        <name>Zn(2+)</name>
        <dbReference type="ChEBI" id="CHEBI:29105"/>
        <note>catalytic</note>
    </ligand>
</feature>
<feature type="binding site" evidence="1">
    <location>
        <begin position="209"/>
        <end position="211"/>
    </location>
    <ligand>
        <name>dihydroxyacetone phosphate</name>
        <dbReference type="ChEBI" id="CHEBI:57642"/>
    </ligand>
</feature>
<feature type="binding site" evidence="1">
    <location>
        <begin position="230"/>
        <end position="233"/>
    </location>
    <ligand>
        <name>dihydroxyacetone phosphate</name>
        <dbReference type="ChEBI" id="CHEBI:57642"/>
    </ligand>
</feature>
<evidence type="ECO:0000250" key="1"/>
<evidence type="ECO:0000269" key="2">
    <source>
    </source>
</evidence>
<evidence type="ECO:0000305" key="3"/>
<reference key="1">
    <citation type="journal article" date="2004" name="Mol. Genet. Genomics">
        <title>The genes and enzymes for the catabolism of galactitol, D-tagatose, and related carbohydrates in Klebsiella oxytoca M5a1 and other enteric bacteria display convergent evolution.</title>
        <authorList>
            <person name="Shakeri-Garakani A."/>
            <person name="Brinkkoetter A."/>
            <person name="Schmid K."/>
            <person name="Turgut S."/>
            <person name="Lengeler J.W."/>
        </authorList>
    </citation>
    <scope>NUCLEOTIDE SEQUENCE [GENOMIC DNA]</scope>
    <scope>FUNCTION IN GALACTITOL AND D-TAGATOSE CATABOLISM</scope>
    <scope>INDUCTION</scope>
    <source>
        <strain>M5a1</strain>
    </source>
</reference>
<sequence>MFIISSKNMLLKAQRLGYAVPAFNIHNLETMQVVVETAAELRSPLILAGTPGTYSYAGTGNVVAIARDLAKIWDLPLAVHLDHHEDLADITRKVQAGIRSVMIDGSHSPFEENVALVKSVVELSHRYDASVEAELGRLGGVEDDLGVDAKDALYTNPEQGREFVARTGIDSLAVVIGTAHGLYAAEPKLGFAALPPISERVDVPLVLHGASKLPDSDIRRAISLGVCKVNVATELKIAFSDALKHYFEENPDANEPRHYMKPAKAAMKDVVRKVIHVCGCEGQL</sequence>
<keyword id="KW-0298">Galactitol metabolism</keyword>
<keyword id="KW-0456">Lyase</keyword>
<keyword id="KW-0479">Metal-binding</keyword>
<keyword id="KW-0862">Zinc</keyword>
<protein>
    <recommendedName>
        <fullName>D-tagatose-1,6-bisphosphate aldolase subunit GatY</fullName>
        <shortName>TBPA</shortName>
        <shortName>TagBP aldolase</shortName>
        <ecNumber>4.1.2.40</ecNumber>
    </recommendedName>
    <alternativeName>
        <fullName>D-tagatose-bisphosphate aldolase class II</fullName>
    </alternativeName>
    <alternativeName>
        <fullName>Tagatose-bisphosphate aldolase</fullName>
    </alternativeName>
</protein>
<accession>Q8VS16</accession>
<comment type="function">
    <text evidence="2">Catalytic subunit of the tagatose-1,6-bisphosphate aldolase GatYZ, which catalyzes the reversible aldol condensation of dihydroxyacetone phosphate (DHAP or glycerone-phosphate) with glyceraldehyde 3-phosphate (G3P) to produce tagatose 1,6-bisphosphate (TBP). Requires GatZ subunit for full activity and stability. Is involved in the catabolism of galactitol and D-tagatose.</text>
</comment>
<comment type="catalytic activity">
    <reaction>
        <text>D-tagatofuranose 1,6-bisphosphate = D-glyceraldehyde 3-phosphate + dihydroxyacetone phosphate</text>
        <dbReference type="Rhea" id="RHEA:22948"/>
        <dbReference type="ChEBI" id="CHEBI:57642"/>
        <dbReference type="ChEBI" id="CHEBI:58694"/>
        <dbReference type="ChEBI" id="CHEBI:59776"/>
        <dbReference type="EC" id="4.1.2.40"/>
    </reaction>
</comment>
<comment type="cofactor">
    <cofactor evidence="1">
        <name>Zn(2+)</name>
        <dbReference type="ChEBI" id="CHEBI:29105"/>
    </cofactor>
    <text evidence="1">Binds 1 zinc ion per subunit.</text>
</comment>
<comment type="pathway">
    <text>Carbohydrate metabolism; D-tagatose 6-phosphate degradation; D-glyceraldehyde 3-phosphate and glycerone phosphate from D-tagatose 6-phosphate: step 2/2.</text>
</comment>
<comment type="subunit">
    <text evidence="3">Forms a complex with GatZ.</text>
</comment>
<comment type="induction">
    <text evidence="2">By galactitol.</text>
</comment>
<comment type="similarity">
    <text evidence="3">Belongs to the class II fructose-bisphosphate aldolase family. TagBP aldolase GatY subfamily.</text>
</comment>
<proteinExistence type="evidence at protein level"/>
<gene>
    <name type="primary">gatY</name>
</gene>